<comment type="function">
    <text evidence="1 3 6 7">Dermonecrotic toxins cleave the phosphodiester linkage between the phosphate and headgroup of certain phospholipids (sphingolipid and lysolipid substrates), forming an alcohol (often choline) and a cyclic phosphate (By similarity). This toxin acts on sphingomyelin (SM) with high activity (PubMed:12419302, PubMed:14732720). It also act on acyl- and alkyl-lysophosphatidylcholine (LPC), but not on sphingosylphosphorylcholine (SPC) and phosphatidylcholine (PC) (PubMed:14732720). It may also act on ceramide phosphoethanolamine (CPE), and lysophosphatidylethanolamine (LPE), but not on lysophosphatidylserine (LPS), and lysophosphatidylglycerol (LPG) (By similarity). It acts by transphosphatidylation, releasing exclusively cyclic phosphate products as second products (By similarity). Induces complement-dependent hemolysis and dermonecrosis (PubMed:12419302). Also induces increased vascular permeability, edema, inflammatory response, and platelet aggregation (By similarity).</text>
</comment>
<comment type="catalytic activity">
    <reaction evidence="13 14">
        <text>an N-(acyl)-sphingosylphosphocholine = an N-(acyl)-sphingosyl-1,3-cyclic phosphate + choline</text>
        <dbReference type="Rhea" id="RHEA:60652"/>
        <dbReference type="ChEBI" id="CHEBI:15354"/>
        <dbReference type="ChEBI" id="CHEBI:64583"/>
        <dbReference type="ChEBI" id="CHEBI:143892"/>
    </reaction>
</comment>
<comment type="catalytic activity">
    <reaction evidence="1">
        <text>an N-(acyl)-sphingosylphosphoethanolamine = an N-(acyl)-sphingosyl-1,3-cyclic phosphate + ethanolamine</text>
        <dbReference type="Rhea" id="RHEA:60648"/>
        <dbReference type="ChEBI" id="CHEBI:57603"/>
        <dbReference type="ChEBI" id="CHEBI:143891"/>
        <dbReference type="ChEBI" id="CHEBI:143892"/>
    </reaction>
</comment>
<comment type="catalytic activity">
    <reaction evidence="14">
        <text>a 1-acyl-sn-glycero-3-phosphocholine = a 1-acyl-sn-glycero-2,3-cyclic phosphate + choline</text>
        <dbReference type="Rhea" id="RHEA:60700"/>
        <dbReference type="ChEBI" id="CHEBI:15354"/>
        <dbReference type="ChEBI" id="CHEBI:58168"/>
        <dbReference type="ChEBI" id="CHEBI:143947"/>
    </reaction>
</comment>
<comment type="catalytic activity">
    <reaction evidence="1">
        <text>a 1-acyl-sn-glycero-3-phosphoethanolamine = a 1-acyl-sn-glycero-2,3-cyclic phosphate + ethanolamine</text>
        <dbReference type="Rhea" id="RHEA:60704"/>
        <dbReference type="ChEBI" id="CHEBI:57603"/>
        <dbReference type="ChEBI" id="CHEBI:64381"/>
        <dbReference type="ChEBI" id="CHEBI:143947"/>
    </reaction>
</comment>
<comment type="cofactor">
    <cofactor evidence="7 8 9 16 17">
        <name>Mg(2+)</name>
        <dbReference type="ChEBI" id="CHEBI:18420"/>
    </cofactor>
    <text evidence="7 8 9 16 17">Binds 1 Mg(2+) ion per subunit.</text>
</comment>
<comment type="biophysicochemical properties">
    <kinetics>
        <KM evidence="7">44.4 uM for 1-oleoyl-LPC</KM>
        <Vmax evidence="7">212.0 nmol/min/mg enzyme toward 1-oleoyl-LPC</Vmax>
    </kinetics>
</comment>
<comment type="subcellular location">
    <subcellularLocation>
        <location evidence="13">Secreted</location>
    </subcellularLocation>
</comment>
<comment type="tissue specificity">
    <text evidence="13">Expressed by the venom gland.</text>
</comment>
<comment type="similarity">
    <text evidence="12">Belongs to the arthropod phospholipase D family. Class I subfamily.</text>
</comment>
<comment type="caution">
    <text evidence="1 2 4">The most common activity assay for dermonecrotic toxins detects enzymatic activity by monitoring choline release from substrate. Liberation of choline from sphingomyelin (SM) or lysophosphatidylcholine (LPC) is commonly assumed to result from substrate hydrolysis, giving either ceramide-1-phosphate (C1P) or lysophosphatidic acid (LPA), respectively, as a second product. However, two studies from Lajoie and colleagues (2013 and 2015) report the observation of exclusive formation of cyclic phosphate products as second products, resulting from intramolecular transphosphatidylation. Cyclic phosphates have vastly different biological properties from their monoester counterparts, and they may be relevant to the pathology of brown spider envenomation.</text>
</comment>
<organism>
    <name type="scientific">Loxosceles laeta</name>
    <name type="common">South American recluse spider</name>
    <name type="synonym">Scytodes laeta</name>
    <dbReference type="NCBI Taxonomy" id="58217"/>
    <lineage>
        <taxon>Eukaryota</taxon>
        <taxon>Metazoa</taxon>
        <taxon>Ecdysozoa</taxon>
        <taxon>Arthropoda</taxon>
        <taxon>Chelicerata</taxon>
        <taxon>Arachnida</taxon>
        <taxon>Araneae</taxon>
        <taxon>Araneomorphae</taxon>
        <taxon>Haplogynae</taxon>
        <taxon>Scytodoidea</taxon>
        <taxon>Sicariidae</taxon>
        <taxon>Loxosceles</taxon>
    </lineage>
</organism>
<protein>
    <recommendedName>
        <fullName>Dermonecrotic toxin LlSicTox-alphaIII1i</fullName>
        <ecNumber evidence="4">4.6.1.-</ecNumber>
    </recommendedName>
    <alternativeName>
        <fullName>LlH17</fullName>
    </alternativeName>
    <alternativeName>
        <fullName>Phospholipase D</fullName>
        <shortName>PLD</shortName>
    </alternativeName>
    <alternativeName>
        <fullName>Sphingomyelin phosphodiesterase D 1</fullName>
        <shortName evidence="11">Lox-SMaseD</shortName>
        <shortName>SMD 1</shortName>
        <shortName evidence="11">SMase D 1</shortName>
        <shortName>Sphingomyelinase D 1</shortName>
    </alternativeName>
    <alternativeName>
        <fullName>Sphingomyelinase I</fullName>
        <shortName evidence="10">SMase I</shortName>
    </alternativeName>
</protein>
<sequence>MYAHLALILGCWTVVLQGAETDVGERADNRRPIWNLAHMVNAVAQIPDFLDLGANALEADVTFKGSVPTYTYHGTPCDFGRDCIRWEYFNVFLKTLREYTTPGNAKYRDGFILFVLDLKTGSLSNDQVRPAGENVAKELLQNYWNNGNNGGRAYVVLSLPDIGHYEFVRGFKEVLKKEGHEDLLEKVGYDFSGPYLPSLPTLDATHEAYKKAGVDGHIWLSDGLTNFSPLGDMARLKEAIKSRDSANGFINKIYYWSVDKVSTTKAALDVGVDGIMTNYPNVLIGVLKESGYNDKYRLATYDDNPWETFKN</sequence>
<dbReference type="EC" id="4.6.1.-" evidence="4"/>
<dbReference type="EMBL" id="AY093599">
    <property type="protein sequence ID" value="AAM21154.1"/>
    <property type="molecule type" value="mRNA"/>
</dbReference>
<dbReference type="PDB" id="1XX1">
    <property type="method" value="X-ray"/>
    <property type="resolution" value="1.75 A"/>
    <property type="chains" value="A/B/C/D=27-311"/>
</dbReference>
<dbReference type="PDB" id="2F9R">
    <property type="method" value="X-ray"/>
    <property type="resolution" value="1.85 A"/>
    <property type="chains" value="A/B/C/D=27-311"/>
</dbReference>
<dbReference type="PDBsum" id="1XX1"/>
<dbReference type="PDBsum" id="2F9R"/>
<dbReference type="SMR" id="Q8I914"/>
<dbReference type="ArachnoServer" id="AS000132">
    <property type="toxin name" value="Sphingomyelinase D (LlSicTox-alphaIII1i)"/>
</dbReference>
<dbReference type="BRENDA" id="3.1.4.41">
    <property type="organism ID" value="6922"/>
</dbReference>
<dbReference type="SABIO-RK" id="Q8I914"/>
<dbReference type="EvolutionaryTrace" id="Q8I914"/>
<dbReference type="GO" id="GO:0005576">
    <property type="term" value="C:extracellular region"/>
    <property type="evidence" value="ECO:0007669"/>
    <property type="project" value="UniProtKB-SubCell"/>
</dbReference>
<dbReference type="GO" id="GO:0016829">
    <property type="term" value="F:lyase activity"/>
    <property type="evidence" value="ECO:0007669"/>
    <property type="project" value="UniProtKB-KW"/>
</dbReference>
<dbReference type="GO" id="GO:0046872">
    <property type="term" value="F:metal ion binding"/>
    <property type="evidence" value="ECO:0007669"/>
    <property type="project" value="UniProtKB-KW"/>
</dbReference>
<dbReference type="GO" id="GO:0008081">
    <property type="term" value="F:phosphoric diester hydrolase activity"/>
    <property type="evidence" value="ECO:0007669"/>
    <property type="project" value="InterPro"/>
</dbReference>
<dbReference type="GO" id="GO:0090729">
    <property type="term" value="F:toxin activity"/>
    <property type="evidence" value="ECO:0007669"/>
    <property type="project" value="UniProtKB-KW"/>
</dbReference>
<dbReference type="GO" id="GO:0031640">
    <property type="term" value="P:killing of cells of another organism"/>
    <property type="evidence" value="ECO:0007669"/>
    <property type="project" value="UniProtKB-KW"/>
</dbReference>
<dbReference type="GO" id="GO:0016042">
    <property type="term" value="P:lipid catabolic process"/>
    <property type="evidence" value="ECO:0007669"/>
    <property type="project" value="UniProtKB-KW"/>
</dbReference>
<dbReference type="CDD" id="cd08576">
    <property type="entry name" value="GDPD_like_SMaseD_PLD"/>
    <property type="match status" value="1"/>
</dbReference>
<dbReference type="Gene3D" id="3.20.20.190">
    <property type="entry name" value="Phosphatidylinositol (PI) phosphodiesterase"/>
    <property type="match status" value="1"/>
</dbReference>
<dbReference type="InterPro" id="IPR017946">
    <property type="entry name" value="PLC-like_Pdiesterase_TIM-brl"/>
</dbReference>
<dbReference type="SUPFAM" id="SSF51695">
    <property type="entry name" value="PLC-like phosphodiesterases"/>
    <property type="match status" value="1"/>
</dbReference>
<proteinExistence type="evidence at protein level"/>
<accession>Q8I914</accession>
<feature type="signal peptide" evidence="5">
    <location>
        <begin position="1"/>
        <end position="21"/>
    </location>
</feature>
<feature type="propeptide" id="PRO_0000035583" evidence="15">
    <location>
        <begin position="22"/>
        <end position="26"/>
    </location>
</feature>
<feature type="chain" id="PRO_0000035584" description="Dermonecrotic toxin LlSicTox-alphaIII1i">
    <location>
        <begin position="27"/>
        <end position="311"/>
    </location>
</feature>
<feature type="active site" evidence="8">
    <location>
        <position position="38"/>
    </location>
</feature>
<feature type="active site" description="Nucleophile" evidence="8">
    <location>
        <position position="73"/>
    </location>
</feature>
<feature type="binding site" evidence="8 9 16 17">
    <location>
        <position position="58"/>
    </location>
    <ligand>
        <name>Mg(2+)</name>
        <dbReference type="ChEBI" id="CHEBI:18420"/>
    </ligand>
</feature>
<feature type="binding site" evidence="8 9 16 17">
    <location>
        <position position="60"/>
    </location>
    <ligand>
        <name>Mg(2+)</name>
        <dbReference type="ChEBI" id="CHEBI:18420"/>
    </ligand>
</feature>
<feature type="binding site" evidence="8 9 16 17">
    <location>
        <position position="117"/>
    </location>
    <ligand>
        <name>Mg(2+)</name>
        <dbReference type="ChEBI" id="CHEBI:18420"/>
    </ligand>
</feature>
<feature type="disulfide bond" evidence="8 9">
    <location>
        <begin position="77"/>
        <end position="83"/>
    </location>
</feature>
<feature type="strand" evidence="18">
    <location>
        <begin position="30"/>
        <end position="38"/>
    </location>
</feature>
<feature type="helix" evidence="18">
    <location>
        <begin position="45"/>
        <end position="52"/>
    </location>
</feature>
<feature type="strand" evidence="18">
    <location>
        <begin position="55"/>
        <end position="64"/>
    </location>
</feature>
<feature type="strand" evidence="18">
    <location>
        <begin position="67"/>
        <end position="72"/>
    </location>
</feature>
<feature type="strand" evidence="18">
    <location>
        <begin position="86"/>
        <end position="88"/>
    </location>
</feature>
<feature type="helix" evidence="18">
    <location>
        <begin position="89"/>
        <end position="99"/>
    </location>
</feature>
<feature type="strand" evidence="18">
    <location>
        <begin position="113"/>
        <end position="118"/>
    </location>
</feature>
<feature type="helix" evidence="18">
    <location>
        <begin position="125"/>
        <end position="127"/>
    </location>
</feature>
<feature type="helix" evidence="18">
    <location>
        <begin position="128"/>
        <end position="142"/>
    </location>
</feature>
<feature type="helix" evidence="18">
    <location>
        <begin position="145"/>
        <end position="147"/>
    </location>
</feature>
<feature type="strand" evidence="18">
    <location>
        <begin position="154"/>
        <end position="160"/>
    </location>
</feature>
<feature type="helix" evidence="18">
    <location>
        <begin position="162"/>
        <end position="164"/>
    </location>
</feature>
<feature type="helix" evidence="18">
    <location>
        <begin position="165"/>
        <end position="177"/>
    </location>
</feature>
<feature type="helix" evidence="18">
    <location>
        <begin position="181"/>
        <end position="186"/>
    </location>
</feature>
<feature type="strand" evidence="18">
    <location>
        <begin position="187"/>
        <end position="191"/>
    </location>
</feature>
<feature type="strand" evidence="18">
    <location>
        <begin position="196"/>
        <end position="198"/>
    </location>
</feature>
<feature type="helix" evidence="18">
    <location>
        <begin position="202"/>
        <end position="212"/>
    </location>
</feature>
<feature type="strand" evidence="18">
    <location>
        <begin position="218"/>
        <end position="222"/>
    </location>
</feature>
<feature type="helix" evidence="18">
    <location>
        <begin position="229"/>
        <end position="243"/>
    </location>
</feature>
<feature type="strand" evidence="18">
    <location>
        <begin position="252"/>
        <end position="256"/>
    </location>
</feature>
<feature type="helix" evidence="18">
    <location>
        <begin position="261"/>
        <end position="270"/>
    </location>
</feature>
<feature type="strand" evidence="18">
    <location>
        <begin position="273"/>
        <end position="278"/>
    </location>
</feature>
<feature type="helix" evidence="18">
    <location>
        <begin position="280"/>
        <end position="288"/>
    </location>
</feature>
<feature type="turn" evidence="18">
    <location>
        <begin position="290"/>
        <end position="295"/>
    </location>
</feature>
<feature type="strand" evidence="18">
    <location>
        <begin position="296"/>
        <end position="298"/>
    </location>
</feature>
<evidence type="ECO:0000250" key="1">
    <source>
        <dbReference type="UniProtKB" id="A0A0D4WTV1"/>
    </source>
</evidence>
<evidence type="ECO:0000250" key="2">
    <source>
        <dbReference type="UniProtKB" id="A0A0D4WV12"/>
    </source>
</evidence>
<evidence type="ECO:0000250" key="3">
    <source>
        <dbReference type="UniProtKB" id="P0CE80"/>
    </source>
</evidence>
<evidence type="ECO:0000250" key="4">
    <source>
        <dbReference type="UniProtKB" id="Q4ZFU2"/>
    </source>
</evidence>
<evidence type="ECO:0000255" key="5"/>
<evidence type="ECO:0000269" key="6">
    <source>
    </source>
</evidence>
<evidence type="ECO:0000269" key="7">
    <source>
    </source>
</evidence>
<evidence type="ECO:0000269" key="8">
    <source>
    </source>
</evidence>
<evidence type="ECO:0000269" key="9">
    <source>
    </source>
</evidence>
<evidence type="ECO:0000303" key="10">
    <source>
    </source>
</evidence>
<evidence type="ECO:0000303" key="11">
    <source>
    </source>
</evidence>
<evidence type="ECO:0000305" key="12"/>
<evidence type="ECO:0000305" key="13">
    <source>
    </source>
</evidence>
<evidence type="ECO:0000305" key="14">
    <source>
    </source>
</evidence>
<evidence type="ECO:0000305" key="15">
    <source>
    </source>
</evidence>
<evidence type="ECO:0000312" key="16">
    <source>
        <dbReference type="PDB" id="1XX1"/>
    </source>
</evidence>
<evidence type="ECO:0000312" key="17">
    <source>
        <dbReference type="PDB" id="2F9R"/>
    </source>
</evidence>
<evidence type="ECO:0007829" key="18">
    <source>
        <dbReference type="PDB" id="1XX1"/>
    </source>
</evidence>
<reference key="1">
    <citation type="journal article" date="2002" name="Biochem. Biophys. Res. Commun.">
        <title>Molecular cloning and expression of a functional dermonecrotic and haemolytic factor from Loxosceles laeta venom.</title>
        <authorList>
            <person name="Fernandes-Pedrosa M.F."/>
            <person name="Junqueira de Azevedo I.L.M."/>
            <person name="Goncalves-de-Andrade R.M."/>
            <person name="van den Berg C.W."/>
            <person name="Ramos C.R.R."/>
            <person name="Ho P.L."/>
            <person name="Tambourgi D.V."/>
        </authorList>
    </citation>
    <scope>NUCLEOTIDE SEQUENCE [MRNA]</scope>
    <scope>FUNCTION</scope>
    <scope>CATALYTIC ACTIVITY</scope>
    <source>
        <tissue>Venom gland</tissue>
    </source>
</reference>
<reference key="2">
    <citation type="journal article" date="2004" name="J. Biol. Chem.">
        <title>Spider and bacterial sphingomyelinases D target cellular lysophosphatidic acid receptors by hydrolyzing lysophosphatidylcholine.</title>
        <authorList>
            <person name="van Meeteren L.A."/>
            <person name="Frederiks F."/>
            <person name="Giepmans B.N."/>
            <person name="Pedrosa M.F."/>
            <person name="Billington S.J."/>
            <person name="Jost B.H."/>
            <person name="Tambourgi D.V."/>
            <person name="Moolenaar W.H."/>
        </authorList>
    </citation>
    <scope>FUNCTION</scope>
    <scope>CATALYTIC ACTIVITY</scope>
    <scope>COFACTOR</scope>
    <scope>BIOPHYSICOCHEMICAL PROPERTIES</scope>
    <scope>SUBSTRATE SPECIFICITY</scope>
</reference>
<reference key="3">
    <citation type="journal article" date="2005" name="J. Biol. Chem.">
        <title>Structural basis for metal ion coordination and the catalytic mechanism of sphingomyelinases D.</title>
        <authorList>
            <person name="Murakami M.T."/>
            <person name="Fernandes-Pedrosa M.F."/>
            <person name="Tambourgi D.V."/>
            <person name="Arni R.K."/>
        </authorList>
    </citation>
    <scope>X-RAY CRYSTALLOGRAPHY (1.75 ANGSTROMS) OF 27-311</scope>
    <scope>DISULFIDE BONDS</scope>
    <scope>METAL-BINDING SITES</scope>
    <scope>ACTIVE SITES</scope>
    <scope>COFACTOR</scope>
</reference>
<reference key="4">
    <citation type="journal article" date="2006" name="Biochem. Biophys. Res. Commun.">
        <title>Structural insights into the catalytic mechanism of sphingomyelinases D and evolutionary relationship to glycerophosphodiester phosphodiesterases.</title>
        <authorList>
            <person name="Murakami M.T."/>
            <person name="Fernandes-Pedrosa M.F."/>
            <person name="de Andrade S.A."/>
            <person name="Gabdoulkhakov A."/>
            <person name="Betzel C."/>
            <person name="Tambourgi D.V."/>
            <person name="Arni R.K."/>
        </authorList>
    </citation>
    <scope>X-RAY CRYSTALLOGRAPHY (1.85 ANGSTROMS) OF 27-311</scope>
    <scope>DISULFIDE BONDS</scope>
    <scope>METAL-BINDING SITES</scope>
    <scope>ACTIVE SITES</scope>
    <scope>NOMENCLATURE</scope>
    <scope>COFACTOR</scope>
</reference>
<keyword id="KW-0002">3D-structure</keyword>
<keyword id="KW-0204">Cytolysis</keyword>
<keyword id="KW-1061">Dermonecrotic toxin</keyword>
<keyword id="KW-1015">Disulfide bond</keyword>
<keyword id="KW-0354">Hemolysis</keyword>
<keyword id="KW-0442">Lipid degradation</keyword>
<keyword id="KW-0443">Lipid metabolism</keyword>
<keyword id="KW-0456">Lyase</keyword>
<keyword id="KW-0460">Magnesium</keyword>
<keyword id="KW-0479">Metal-binding</keyword>
<keyword id="KW-0964">Secreted</keyword>
<keyword id="KW-0732">Signal</keyword>
<keyword id="KW-0800">Toxin</keyword>
<keyword id="KW-0865">Zymogen</keyword>
<name>A311_LOXLA</name>